<proteinExistence type="evidence at transcript level"/>
<sequence length="309" mass="36047">MDDQGCPRCKTTKYRNPSLKLMVNVCGHTLCESCVELLFVRGSGSCQECDTPLRKSNFKVQLFEDPTIDKEVEIRKKILKIYNKREEDFPSLREYNDFLEEIEEIVLNLTNNVDLDNTRRKIDMYQKENKDTIQRNKIKMTREQEELEEALEMEKHENEQRRLHLQKEEQFQQMMKRKNKQELLDQLETSHLPASILLAQHKGKSVQAEMQVEKPRSFKTDTFSTGIKKGHHIASVPVTKIEEALYQYQPIHIETYGPQVPHIEMLGRQGYLNHVRAAAPQDLAGGYVSSLACHRALQDAFSGLFWQTH</sequence>
<organism>
    <name type="scientific">Xenopus laevis</name>
    <name type="common">African clawed frog</name>
    <dbReference type="NCBI Taxonomy" id="8355"/>
    <lineage>
        <taxon>Eukaryota</taxon>
        <taxon>Metazoa</taxon>
        <taxon>Chordata</taxon>
        <taxon>Craniata</taxon>
        <taxon>Vertebrata</taxon>
        <taxon>Euteleostomi</taxon>
        <taxon>Amphibia</taxon>
        <taxon>Batrachia</taxon>
        <taxon>Anura</taxon>
        <taxon>Pipoidea</taxon>
        <taxon>Pipidae</taxon>
        <taxon>Xenopodinae</taxon>
        <taxon>Xenopus</taxon>
        <taxon>Xenopus</taxon>
    </lineage>
</organism>
<reference key="1">
    <citation type="journal article" date="1995" name="EMBO J.">
        <title>MAT1 ('menage a trois') a new RING finger protein subunit stabilizing cyclin H-cdk7 complexes in starfish and Xenopus CAK.</title>
        <authorList>
            <person name="Devault A."/>
            <person name="Martinez A.-M."/>
            <person name="Fesquet D."/>
            <person name="Labbe J.-C."/>
            <person name="Morin N."/>
            <person name="Tassan J.-P."/>
            <person name="Nigg E.A."/>
            <person name="Cavadore J.-C."/>
            <person name="Doree M."/>
        </authorList>
    </citation>
    <scope>NUCLEOTIDE SEQUENCE [MRNA]</scope>
    <source>
        <tissue>Oocyte</tissue>
    </source>
</reference>
<reference key="2">
    <citation type="submission" date="2003-06" db="EMBL/GenBank/DDBJ databases">
        <authorList>
            <consortium name="NIH - Xenopus Gene Collection (XGC) project"/>
        </authorList>
    </citation>
    <scope>NUCLEOTIDE SEQUENCE [LARGE SCALE MRNA]</scope>
</reference>
<gene>
    <name type="primary">mnat1</name>
</gene>
<comment type="function">
    <text>Stabilizes the cyclin H-CDK7 complex to form a functional CDK-activating kinase (CAK) enzymatic complex.</text>
</comment>
<comment type="subunit">
    <text>Associates with CDK7 and cyclin H.</text>
</comment>
<comment type="subcellular location">
    <subcellularLocation>
        <location>Nucleus</location>
    </subcellularLocation>
</comment>
<evidence type="ECO:0000255" key="1">
    <source>
        <dbReference type="PROSITE-ProRule" id="PRU00175"/>
    </source>
</evidence>
<evidence type="ECO:0000255" key="2">
    <source>
        <dbReference type="PROSITE-ProRule" id="PRU00213"/>
    </source>
</evidence>
<name>MAT1_XENLA</name>
<protein>
    <recommendedName>
        <fullName>CDK-activating kinase assembly factor MAT1</fullName>
    </recommendedName>
    <alternativeName>
        <fullName>CDK7/cyclin-H assembly factor</fullName>
    </alternativeName>
    <alternativeName>
        <fullName>Menage a trois</fullName>
    </alternativeName>
    <alternativeName>
        <fullName>RING finger protein MAT1</fullName>
    </alternativeName>
</protein>
<dbReference type="EMBL" id="U29667">
    <property type="protein sequence ID" value="AAC59726.1"/>
    <property type="molecule type" value="mRNA"/>
</dbReference>
<dbReference type="EMBL" id="BC054267">
    <property type="protein sequence ID" value="AAH54267.1"/>
    <property type="molecule type" value="mRNA"/>
</dbReference>
<dbReference type="RefSeq" id="NP_001080361.1">
    <property type="nucleotide sequence ID" value="NM_001086892.2"/>
</dbReference>
<dbReference type="SMR" id="P51951"/>
<dbReference type="DNASU" id="380053"/>
<dbReference type="GeneID" id="380053"/>
<dbReference type="KEGG" id="xla:380053"/>
<dbReference type="AGR" id="Xenbase:XB-GENE-876269"/>
<dbReference type="CTD" id="380053"/>
<dbReference type="Xenbase" id="XB-GENE-876269">
    <property type="gene designation" value="mnat1.L"/>
</dbReference>
<dbReference type="OMA" id="QGLYYTA"/>
<dbReference type="OrthoDB" id="5963at2759"/>
<dbReference type="Proteomes" id="UP000186698">
    <property type="component" value="Chromosome 8L"/>
</dbReference>
<dbReference type="Bgee" id="380053">
    <property type="expression patterns" value="Expressed in egg cell and 19 other cell types or tissues"/>
</dbReference>
<dbReference type="GO" id="GO:0005675">
    <property type="term" value="C:transcription factor TFIIH holo complex"/>
    <property type="evidence" value="ECO:0000318"/>
    <property type="project" value="GO_Central"/>
</dbReference>
<dbReference type="GO" id="GO:0061575">
    <property type="term" value="F:cyclin-dependent protein serine/threonine kinase activator activity"/>
    <property type="evidence" value="ECO:0007669"/>
    <property type="project" value="InterPro"/>
</dbReference>
<dbReference type="GO" id="GO:0008270">
    <property type="term" value="F:zinc ion binding"/>
    <property type="evidence" value="ECO:0007669"/>
    <property type="project" value="UniProtKB-KW"/>
</dbReference>
<dbReference type="GO" id="GO:0051301">
    <property type="term" value="P:cell division"/>
    <property type="evidence" value="ECO:0007669"/>
    <property type="project" value="UniProtKB-KW"/>
</dbReference>
<dbReference type="GO" id="GO:0006281">
    <property type="term" value="P:DNA repair"/>
    <property type="evidence" value="ECO:0000318"/>
    <property type="project" value="GO_Central"/>
</dbReference>
<dbReference type="GO" id="GO:0006289">
    <property type="term" value="P:nucleotide-excision repair"/>
    <property type="evidence" value="ECO:0007669"/>
    <property type="project" value="InterPro"/>
</dbReference>
<dbReference type="GO" id="GO:0006357">
    <property type="term" value="P:regulation of transcription by RNA polymerase II"/>
    <property type="evidence" value="ECO:0000318"/>
    <property type="project" value="GO_Central"/>
</dbReference>
<dbReference type="CDD" id="cd16517">
    <property type="entry name" value="RING-HC_MAT1"/>
    <property type="match status" value="1"/>
</dbReference>
<dbReference type="FunFam" id="3.30.40.10:FF:000037">
    <property type="entry name" value="Cdk-activating kinase assembly factor MAT1, centre"/>
    <property type="match status" value="1"/>
</dbReference>
<dbReference type="Gene3D" id="3.30.40.10">
    <property type="entry name" value="Zinc/RING finger domain, C3HC4 (zinc finger)"/>
    <property type="match status" value="1"/>
</dbReference>
<dbReference type="InterPro" id="IPR015877">
    <property type="entry name" value="Cdk-activating_kinase_MAT1_cen"/>
</dbReference>
<dbReference type="InterPro" id="IPR004575">
    <property type="entry name" value="MAT1/Tfb3"/>
</dbReference>
<dbReference type="InterPro" id="IPR003903">
    <property type="entry name" value="UIM_dom"/>
</dbReference>
<dbReference type="InterPro" id="IPR001841">
    <property type="entry name" value="Znf_RING"/>
</dbReference>
<dbReference type="InterPro" id="IPR013083">
    <property type="entry name" value="Znf_RING/FYVE/PHD"/>
</dbReference>
<dbReference type="InterPro" id="IPR017907">
    <property type="entry name" value="Znf_RING_CS"/>
</dbReference>
<dbReference type="NCBIfam" id="TIGR00570">
    <property type="entry name" value="cdk7"/>
    <property type="match status" value="1"/>
</dbReference>
<dbReference type="PANTHER" id="PTHR12683">
    <property type="entry name" value="CDK-ACTIVATING KINASE ASSEMBLY FACTOR MAT1"/>
    <property type="match status" value="1"/>
</dbReference>
<dbReference type="PANTHER" id="PTHR12683:SF13">
    <property type="entry name" value="CDK-ACTIVATING KINASE ASSEMBLY FACTOR MAT1"/>
    <property type="match status" value="1"/>
</dbReference>
<dbReference type="Pfam" id="PF06391">
    <property type="entry name" value="MAT1"/>
    <property type="match status" value="1"/>
</dbReference>
<dbReference type="Pfam" id="PF17121">
    <property type="entry name" value="zf-C3HC4_5"/>
    <property type="match status" value="1"/>
</dbReference>
<dbReference type="PIRSF" id="PIRSF003338">
    <property type="entry name" value="MAT1_metazoa"/>
    <property type="match status" value="1"/>
</dbReference>
<dbReference type="SUPFAM" id="SSF57850">
    <property type="entry name" value="RING/U-box"/>
    <property type="match status" value="1"/>
</dbReference>
<dbReference type="PROSITE" id="PS50330">
    <property type="entry name" value="UIM"/>
    <property type="match status" value="1"/>
</dbReference>
<dbReference type="PROSITE" id="PS00518">
    <property type="entry name" value="ZF_RING_1"/>
    <property type="match status" value="1"/>
</dbReference>
<dbReference type="PROSITE" id="PS50089">
    <property type="entry name" value="ZF_RING_2"/>
    <property type="match status" value="1"/>
</dbReference>
<feature type="chain" id="PRO_0000055935" description="CDK-activating kinase assembly factor MAT1">
    <location>
        <begin position="1"/>
        <end position="309"/>
    </location>
</feature>
<feature type="domain" description="UIM" evidence="2">
    <location>
        <begin position="142"/>
        <end position="161"/>
    </location>
</feature>
<feature type="zinc finger region" description="RING-type" evidence="1">
    <location>
        <begin position="6"/>
        <end position="50"/>
    </location>
</feature>
<keyword id="KW-0131">Cell cycle</keyword>
<keyword id="KW-0132">Cell division</keyword>
<keyword id="KW-0479">Metal-binding</keyword>
<keyword id="KW-0539">Nucleus</keyword>
<keyword id="KW-1185">Reference proteome</keyword>
<keyword id="KW-0862">Zinc</keyword>
<keyword id="KW-0863">Zinc-finger</keyword>
<accession>P51951</accession>
<accession>Q5D081</accession>